<protein>
    <recommendedName>
        <fullName evidence="1">Coproporphyrin III ferrochelatase</fullName>
        <ecNumber evidence="1">4.99.1.9</ecNumber>
    </recommendedName>
</protein>
<accession>P72183</accession>
<evidence type="ECO:0000255" key="1">
    <source>
        <dbReference type="HAMAP-Rule" id="MF_00323"/>
    </source>
</evidence>
<evidence type="ECO:0000305" key="2"/>
<gene>
    <name evidence="1" type="primary">cpfC</name>
    <name type="synonym">hemH</name>
</gene>
<comment type="function">
    <text evidence="1">Involved in coproporphyrin-dependent heme b biosynthesis. Catalyzes the insertion of ferrous iron into coproporphyrin III to form Fe-coproporphyrin III.</text>
</comment>
<comment type="catalytic activity">
    <reaction evidence="1">
        <text>Fe-coproporphyrin III + 2 H(+) = coproporphyrin III + Fe(2+)</text>
        <dbReference type="Rhea" id="RHEA:49572"/>
        <dbReference type="ChEBI" id="CHEBI:15378"/>
        <dbReference type="ChEBI" id="CHEBI:29033"/>
        <dbReference type="ChEBI" id="CHEBI:68438"/>
        <dbReference type="ChEBI" id="CHEBI:131725"/>
        <dbReference type="EC" id="4.99.1.9"/>
    </reaction>
    <physiologicalReaction direction="right-to-left" evidence="1">
        <dbReference type="Rhea" id="RHEA:49574"/>
    </physiologicalReaction>
</comment>
<comment type="pathway">
    <text evidence="1">Porphyrin-containing compound metabolism; protoheme biosynthesis.</text>
</comment>
<comment type="subcellular location">
    <subcellularLocation>
        <location evidence="1">Cytoplasm</location>
    </subcellularLocation>
</comment>
<comment type="similarity">
    <text evidence="1 2">Belongs to the ferrochelatase family.</text>
</comment>
<sequence>MTSFDALLVAGFGGPESMAEVPDFLQRVSGGHIPPDRLAEVEHHYARFGGVSPVNAQHRALAAALGEALVARGIDVPIANANRHSMPYMDQALADLQSRGIRRVLTLVPTPYASYSGCRAYREELLAGTRIDDEGRPALQVVKLDPYADLPALVTAQVQLLRAALADHPDAHLVFTTHSIPTAMAETSGPHGNAYIPQHLALIDAVMAELAALGLRPSWELAYQSRSGSPRTPWLEPDINDVITRLAGEGVRDVICSPIGFLTDHMEVVWDLDTEAAATAAEHSMAFTRVATVGTLPVFIEGLADLIVAALSTKPGTGPDAPAARHWCTPDCCPNARIAGRPTIPGFAAGPR</sequence>
<organism>
    <name type="scientific">Propionibacterium freudenreichii subsp. freudenreichii</name>
    <dbReference type="NCBI Taxonomy" id="66712"/>
    <lineage>
        <taxon>Bacteria</taxon>
        <taxon>Bacillati</taxon>
        <taxon>Actinomycetota</taxon>
        <taxon>Actinomycetes</taxon>
        <taxon>Propionibacteriales</taxon>
        <taxon>Propionibacteriaceae</taxon>
        <taxon>Propionibacterium</taxon>
    </lineage>
</organism>
<proteinExistence type="inferred from homology"/>
<reference key="1">
    <citation type="journal article" date="1997" name="Appl. Microbiol. Biotechnol.">
        <title>The Propionibacterium freudenreichii hemYHBXRL gene cluster, which encodes enzymes and a regulator involved in the biosynthetic pathway from glutamate to protoheme.</title>
        <authorList>
            <person name="Hashimoto Y."/>
            <person name="Yamashita Y."/>
            <person name="Murooka Y."/>
        </authorList>
    </citation>
    <scope>NUCLEOTIDE SEQUENCE [GENOMIC DNA]</scope>
    <source>
        <strain>ATCC 6207 / DSM 20271 / LMG 16412 / NBRC 12424 / NCIMB 5959 / NCTC 10470 / NRRL B-3523</strain>
    </source>
</reference>
<reference key="2">
    <citation type="submission" date="1996-03" db="EMBL/GenBank/DDBJ databases">
        <authorList>
            <person name="Roessner C.A."/>
        </authorList>
    </citation>
    <scope>NUCLEOTIDE SEQUENCE [GENOMIC DNA] OF 259-352</scope>
</reference>
<keyword id="KW-0963">Cytoplasm</keyword>
<keyword id="KW-0350">Heme biosynthesis</keyword>
<keyword id="KW-0408">Iron</keyword>
<keyword id="KW-0456">Lyase</keyword>
<keyword id="KW-0479">Metal-binding</keyword>
<keyword id="KW-0627">Porphyrin biosynthesis</keyword>
<feature type="chain" id="PRO_0000175179" description="Coproporphyrin III ferrochelatase">
    <location>
        <begin position="1"/>
        <end position="352"/>
    </location>
</feature>
<feature type="binding site" evidence="1">
    <location>
        <position position="52"/>
    </location>
    <ligand>
        <name>Fe-coproporphyrin III</name>
        <dbReference type="ChEBI" id="CHEBI:68438"/>
    </ligand>
</feature>
<feature type="binding site" evidence="1">
    <location>
        <position position="121"/>
    </location>
    <ligand>
        <name>Fe-coproporphyrin III</name>
        <dbReference type="ChEBI" id="CHEBI:68438"/>
    </ligand>
</feature>
<feature type="binding site" evidence="1">
    <location>
        <position position="178"/>
    </location>
    <ligand>
        <name>Fe(2+)</name>
        <dbReference type="ChEBI" id="CHEBI:29033"/>
    </ligand>
</feature>
<feature type="binding site" evidence="1">
    <location>
        <position position="267"/>
    </location>
    <ligand>
        <name>Fe(2+)</name>
        <dbReference type="ChEBI" id="CHEBI:29033"/>
    </ligand>
</feature>
<name>CPFC_PROFF</name>
<dbReference type="EC" id="4.99.1.9" evidence="1"/>
<dbReference type="EMBL" id="D85417">
    <property type="protein sequence ID" value="BAA21910.1"/>
    <property type="molecule type" value="Genomic_DNA"/>
</dbReference>
<dbReference type="EMBL" id="U51164">
    <property type="protein sequence ID" value="AAB07862.1"/>
    <property type="molecule type" value="Genomic_DNA"/>
</dbReference>
<dbReference type="RefSeq" id="WP_044636334.1">
    <property type="nucleotide sequence ID" value="NZ_CP010341.1"/>
</dbReference>
<dbReference type="SMR" id="P72183"/>
<dbReference type="KEGG" id="pfre:RM25_1800"/>
<dbReference type="UniPathway" id="UPA00252"/>
<dbReference type="GO" id="GO:0005737">
    <property type="term" value="C:cytoplasm"/>
    <property type="evidence" value="ECO:0007669"/>
    <property type="project" value="UniProtKB-SubCell"/>
</dbReference>
<dbReference type="GO" id="GO:0004325">
    <property type="term" value="F:ferrochelatase activity"/>
    <property type="evidence" value="ECO:0007669"/>
    <property type="project" value="UniProtKB-UniRule"/>
</dbReference>
<dbReference type="GO" id="GO:0046872">
    <property type="term" value="F:metal ion binding"/>
    <property type="evidence" value="ECO:0007669"/>
    <property type="project" value="UniProtKB-KW"/>
</dbReference>
<dbReference type="GO" id="GO:0006783">
    <property type="term" value="P:heme biosynthetic process"/>
    <property type="evidence" value="ECO:0007669"/>
    <property type="project" value="UniProtKB-UniRule"/>
</dbReference>
<dbReference type="CDD" id="cd00419">
    <property type="entry name" value="Ferrochelatase_C"/>
    <property type="match status" value="1"/>
</dbReference>
<dbReference type="CDD" id="cd03411">
    <property type="entry name" value="Ferrochelatase_N"/>
    <property type="match status" value="1"/>
</dbReference>
<dbReference type="Gene3D" id="3.40.50.1400">
    <property type="match status" value="2"/>
</dbReference>
<dbReference type="HAMAP" id="MF_00323">
    <property type="entry name" value="Ferrochelatase"/>
    <property type="match status" value="1"/>
</dbReference>
<dbReference type="InterPro" id="IPR001015">
    <property type="entry name" value="Ferrochelatase"/>
</dbReference>
<dbReference type="InterPro" id="IPR019772">
    <property type="entry name" value="Ferrochelatase_AS"/>
</dbReference>
<dbReference type="InterPro" id="IPR033644">
    <property type="entry name" value="Ferrochelatase_C"/>
</dbReference>
<dbReference type="InterPro" id="IPR033659">
    <property type="entry name" value="Ferrochelatase_N"/>
</dbReference>
<dbReference type="NCBIfam" id="TIGR00109">
    <property type="entry name" value="hemH"/>
    <property type="match status" value="1"/>
</dbReference>
<dbReference type="PANTHER" id="PTHR11108">
    <property type="entry name" value="FERROCHELATASE"/>
    <property type="match status" value="1"/>
</dbReference>
<dbReference type="PANTHER" id="PTHR11108:SF1">
    <property type="entry name" value="FERROCHELATASE, MITOCHONDRIAL"/>
    <property type="match status" value="1"/>
</dbReference>
<dbReference type="Pfam" id="PF00762">
    <property type="entry name" value="Ferrochelatase"/>
    <property type="match status" value="1"/>
</dbReference>
<dbReference type="SUPFAM" id="SSF53800">
    <property type="entry name" value="Chelatase"/>
    <property type="match status" value="1"/>
</dbReference>
<dbReference type="PROSITE" id="PS00534">
    <property type="entry name" value="FERROCHELATASE"/>
    <property type="match status" value="1"/>
</dbReference>